<protein>
    <recommendedName>
        <fullName>Histone-lysine N-methyltransferase E(z)</fullName>
        <ecNumber>2.1.1.356</ecNumber>
    </recommendedName>
    <alternativeName>
        <fullName>Lysine N-methyltransferase 6</fullName>
    </alternativeName>
    <alternativeName>
        <fullName>Protein enhancer of zeste</fullName>
    </alternativeName>
</protein>
<organism>
    <name type="scientific">Drosophila melanogaster</name>
    <name type="common">Fruit fly</name>
    <dbReference type="NCBI Taxonomy" id="7227"/>
    <lineage>
        <taxon>Eukaryota</taxon>
        <taxon>Metazoa</taxon>
        <taxon>Ecdysozoa</taxon>
        <taxon>Arthropoda</taxon>
        <taxon>Hexapoda</taxon>
        <taxon>Insecta</taxon>
        <taxon>Pterygota</taxon>
        <taxon>Neoptera</taxon>
        <taxon>Endopterygota</taxon>
        <taxon>Diptera</taxon>
        <taxon>Brachycera</taxon>
        <taxon>Muscomorpha</taxon>
        <taxon>Ephydroidea</taxon>
        <taxon>Drosophilidae</taxon>
        <taxon>Drosophila</taxon>
        <taxon>Sophophora</taxon>
    </lineage>
</organism>
<reference key="1">
    <citation type="journal article" date="1993" name="Mol. Cell. Biol.">
        <title>The Drosophila Polycomb-group gene Enhancer of zeste contains a region with sequence similarity to trithorax.</title>
        <authorList>
            <person name="Jones R.S."/>
            <person name="Gelbart W.M."/>
        </authorList>
    </citation>
    <scope>NUCLEOTIDE SEQUENCE [MRNA]</scope>
</reference>
<reference key="2">
    <citation type="journal article" date="2000" name="Science">
        <title>The genome sequence of Drosophila melanogaster.</title>
        <authorList>
            <person name="Adams M.D."/>
            <person name="Celniker S.E."/>
            <person name="Holt R.A."/>
            <person name="Evans C.A."/>
            <person name="Gocayne J.D."/>
            <person name="Amanatides P.G."/>
            <person name="Scherer S.E."/>
            <person name="Li P.W."/>
            <person name="Hoskins R.A."/>
            <person name="Galle R.F."/>
            <person name="George R.A."/>
            <person name="Lewis S.E."/>
            <person name="Richards S."/>
            <person name="Ashburner M."/>
            <person name="Henderson S.N."/>
            <person name="Sutton G.G."/>
            <person name="Wortman J.R."/>
            <person name="Yandell M.D."/>
            <person name="Zhang Q."/>
            <person name="Chen L.X."/>
            <person name="Brandon R.C."/>
            <person name="Rogers Y.-H.C."/>
            <person name="Blazej R.G."/>
            <person name="Champe M."/>
            <person name="Pfeiffer B.D."/>
            <person name="Wan K.H."/>
            <person name="Doyle C."/>
            <person name="Baxter E.G."/>
            <person name="Helt G."/>
            <person name="Nelson C.R."/>
            <person name="Miklos G.L.G."/>
            <person name="Abril J.F."/>
            <person name="Agbayani A."/>
            <person name="An H.-J."/>
            <person name="Andrews-Pfannkoch C."/>
            <person name="Baldwin D."/>
            <person name="Ballew R.M."/>
            <person name="Basu A."/>
            <person name="Baxendale J."/>
            <person name="Bayraktaroglu L."/>
            <person name="Beasley E.M."/>
            <person name="Beeson K.Y."/>
            <person name="Benos P.V."/>
            <person name="Berman B.P."/>
            <person name="Bhandari D."/>
            <person name="Bolshakov S."/>
            <person name="Borkova D."/>
            <person name="Botchan M.R."/>
            <person name="Bouck J."/>
            <person name="Brokstein P."/>
            <person name="Brottier P."/>
            <person name="Burtis K.C."/>
            <person name="Busam D.A."/>
            <person name="Butler H."/>
            <person name="Cadieu E."/>
            <person name="Center A."/>
            <person name="Chandra I."/>
            <person name="Cherry J.M."/>
            <person name="Cawley S."/>
            <person name="Dahlke C."/>
            <person name="Davenport L.B."/>
            <person name="Davies P."/>
            <person name="de Pablos B."/>
            <person name="Delcher A."/>
            <person name="Deng Z."/>
            <person name="Mays A.D."/>
            <person name="Dew I."/>
            <person name="Dietz S.M."/>
            <person name="Dodson K."/>
            <person name="Doup L.E."/>
            <person name="Downes M."/>
            <person name="Dugan-Rocha S."/>
            <person name="Dunkov B.C."/>
            <person name="Dunn P."/>
            <person name="Durbin K.J."/>
            <person name="Evangelista C.C."/>
            <person name="Ferraz C."/>
            <person name="Ferriera S."/>
            <person name="Fleischmann W."/>
            <person name="Fosler C."/>
            <person name="Gabrielian A.E."/>
            <person name="Garg N.S."/>
            <person name="Gelbart W.M."/>
            <person name="Glasser K."/>
            <person name="Glodek A."/>
            <person name="Gong F."/>
            <person name="Gorrell J.H."/>
            <person name="Gu Z."/>
            <person name="Guan P."/>
            <person name="Harris M."/>
            <person name="Harris N.L."/>
            <person name="Harvey D.A."/>
            <person name="Heiman T.J."/>
            <person name="Hernandez J.R."/>
            <person name="Houck J."/>
            <person name="Hostin D."/>
            <person name="Houston K.A."/>
            <person name="Howland T.J."/>
            <person name="Wei M.-H."/>
            <person name="Ibegwam C."/>
            <person name="Jalali M."/>
            <person name="Kalush F."/>
            <person name="Karpen G.H."/>
            <person name="Ke Z."/>
            <person name="Kennison J.A."/>
            <person name="Ketchum K.A."/>
            <person name="Kimmel B.E."/>
            <person name="Kodira C.D."/>
            <person name="Kraft C.L."/>
            <person name="Kravitz S."/>
            <person name="Kulp D."/>
            <person name="Lai Z."/>
            <person name="Lasko P."/>
            <person name="Lei Y."/>
            <person name="Levitsky A.A."/>
            <person name="Li J.H."/>
            <person name="Li Z."/>
            <person name="Liang Y."/>
            <person name="Lin X."/>
            <person name="Liu X."/>
            <person name="Mattei B."/>
            <person name="McIntosh T.C."/>
            <person name="McLeod M.P."/>
            <person name="McPherson D."/>
            <person name="Merkulov G."/>
            <person name="Milshina N.V."/>
            <person name="Mobarry C."/>
            <person name="Morris J."/>
            <person name="Moshrefi A."/>
            <person name="Mount S.M."/>
            <person name="Moy M."/>
            <person name="Murphy B."/>
            <person name="Murphy L."/>
            <person name="Muzny D.M."/>
            <person name="Nelson D.L."/>
            <person name="Nelson D.R."/>
            <person name="Nelson K.A."/>
            <person name="Nixon K."/>
            <person name="Nusskern D.R."/>
            <person name="Pacleb J.M."/>
            <person name="Palazzolo M."/>
            <person name="Pittman G.S."/>
            <person name="Pan S."/>
            <person name="Pollard J."/>
            <person name="Puri V."/>
            <person name="Reese M.G."/>
            <person name="Reinert K."/>
            <person name="Remington K."/>
            <person name="Saunders R.D.C."/>
            <person name="Scheeler F."/>
            <person name="Shen H."/>
            <person name="Shue B.C."/>
            <person name="Siden-Kiamos I."/>
            <person name="Simpson M."/>
            <person name="Skupski M.P."/>
            <person name="Smith T.J."/>
            <person name="Spier E."/>
            <person name="Spradling A.C."/>
            <person name="Stapleton M."/>
            <person name="Strong R."/>
            <person name="Sun E."/>
            <person name="Svirskas R."/>
            <person name="Tector C."/>
            <person name="Turner R."/>
            <person name="Venter E."/>
            <person name="Wang A.H."/>
            <person name="Wang X."/>
            <person name="Wang Z.-Y."/>
            <person name="Wassarman D.A."/>
            <person name="Weinstock G.M."/>
            <person name="Weissenbach J."/>
            <person name="Williams S.M."/>
            <person name="Woodage T."/>
            <person name="Worley K.C."/>
            <person name="Wu D."/>
            <person name="Yang S."/>
            <person name="Yao Q.A."/>
            <person name="Ye J."/>
            <person name="Yeh R.-F."/>
            <person name="Zaveri J.S."/>
            <person name="Zhan M."/>
            <person name="Zhang G."/>
            <person name="Zhao Q."/>
            <person name="Zheng L."/>
            <person name="Zheng X.H."/>
            <person name="Zhong F.N."/>
            <person name="Zhong W."/>
            <person name="Zhou X."/>
            <person name="Zhu S.C."/>
            <person name="Zhu X."/>
            <person name="Smith H.O."/>
            <person name="Gibbs R.A."/>
            <person name="Myers E.W."/>
            <person name="Rubin G.M."/>
            <person name="Venter J.C."/>
        </authorList>
    </citation>
    <scope>NUCLEOTIDE SEQUENCE [LARGE SCALE GENOMIC DNA]</scope>
    <source>
        <strain>Berkeley</strain>
    </source>
</reference>
<reference key="3">
    <citation type="journal article" date="2002" name="Genome Biol.">
        <title>Annotation of the Drosophila melanogaster euchromatic genome: a systematic review.</title>
        <authorList>
            <person name="Misra S."/>
            <person name="Crosby M.A."/>
            <person name="Mungall C.J."/>
            <person name="Matthews B.B."/>
            <person name="Campbell K.S."/>
            <person name="Hradecky P."/>
            <person name="Huang Y."/>
            <person name="Kaminker J.S."/>
            <person name="Millburn G.H."/>
            <person name="Prochnik S.E."/>
            <person name="Smith C.D."/>
            <person name="Tupy J.L."/>
            <person name="Whitfield E.J."/>
            <person name="Bayraktaroglu L."/>
            <person name="Berman B.P."/>
            <person name="Bettencourt B.R."/>
            <person name="Celniker S.E."/>
            <person name="de Grey A.D.N.J."/>
            <person name="Drysdale R.A."/>
            <person name="Harris N.L."/>
            <person name="Richter J."/>
            <person name="Russo S."/>
            <person name="Schroeder A.J."/>
            <person name="Shu S.Q."/>
            <person name="Stapleton M."/>
            <person name="Yamada C."/>
            <person name="Ashburner M."/>
            <person name="Gelbart W.M."/>
            <person name="Rubin G.M."/>
            <person name="Lewis S.E."/>
        </authorList>
    </citation>
    <scope>GENOME REANNOTATION</scope>
    <source>
        <strain>Berkeley</strain>
    </source>
</reference>
<reference key="4">
    <citation type="journal article" date="2002" name="Genome Biol.">
        <title>A Drosophila full-length cDNA resource.</title>
        <authorList>
            <person name="Stapleton M."/>
            <person name="Carlson J.W."/>
            <person name="Brokstein P."/>
            <person name="Yu C."/>
            <person name="Champe M."/>
            <person name="George R.A."/>
            <person name="Guarin H."/>
            <person name="Kronmiller B."/>
            <person name="Pacleb J.M."/>
            <person name="Park S."/>
            <person name="Wan K.H."/>
            <person name="Rubin G.M."/>
            <person name="Celniker S.E."/>
        </authorList>
    </citation>
    <scope>NUCLEOTIDE SEQUENCE [LARGE SCALE MRNA]</scope>
    <source>
        <strain>Berkeley</strain>
        <tissue>Ovary</tissue>
    </source>
</reference>
<reference key="5">
    <citation type="journal article" date="1996" name="Development">
        <title>The Drosophila Enhancer of zeste gene encodes a chromosomal protein: examination of wild-type and mutant protein distribution.</title>
        <authorList>
            <person name="Carrington E.A."/>
            <person name="Jones R.S."/>
        </authorList>
    </citation>
    <scope>SUBCELLULAR LOCATION</scope>
</reference>
<reference key="6">
    <citation type="journal article" date="1998" name="Mol. Cell. Biol.">
        <title>The Drosophila esc and E(z) proteins are direct partners in polycomb group-mediated repression.</title>
        <authorList>
            <person name="Jones C.A."/>
            <person name="Ng J."/>
            <person name="Peterson A.J."/>
            <person name="Morgan K."/>
            <person name="Simon J.A."/>
            <person name="Jones R.S."/>
        </authorList>
    </citation>
    <scope>INTERACTION WITH ESC</scope>
</reference>
<reference key="7">
    <citation type="journal article" date="2001" name="Development">
        <title>The Drosophila polycomb group proteins ESC and E(Z) are present in a complex containing the histone-binding protein p55 and the histone deacetylase RPD3.</title>
        <authorList>
            <person name="Tie F."/>
            <person name="Furuyama T."/>
            <person name="Prasad-Sinha J."/>
            <person name="Jane E."/>
            <person name="Harte P.J."/>
        </authorList>
    </citation>
    <scope>IDENTIFICATION IN AN ESC/E(Z) COMPLEX WITH CAF1-55; ESC AND HDAC1</scope>
</reference>
<reference key="8">
    <citation type="journal article" date="2001" name="Genes Dev.">
        <title>Establishment of Polycomb silencing requires a transient interaction between PC and ESC.</title>
        <authorList>
            <person name="Poux S."/>
            <person name="Melfi R."/>
            <person name="Pirrotta V."/>
        </authorList>
    </citation>
    <scope>IDENTIFICATION IN A COMPLEX WITH HDAC1; PHO AND ESC</scope>
    <scope>TRANSIENT INTERACTION WITH THE PRC1 COMPLEX</scope>
</reference>
<reference key="9">
    <citation type="journal article" date="2002" name="Cell">
        <title>Drosophila Enhancer of zeste/ESC complexes have a histone H3 methyltransferase activity that marks chromosomal Polycomb sites.</title>
        <authorList>
            <person name="Czermin B."/>
            <person name="Melfi R."/>
            <person name="McCabe D."/>
            <person name="Seitz V."/>
            <person name="Imhof A."/>
            <person name="Pirrotta V."/>
        </authorList>
    </citation>
    <scope>IDENTIFICATION IN AN ESC/E(Z) COMPLEX WITH CAF1-55; ESC; HDAC1 AND SU(Z)12</scope>
    <scope>METHYLTRANSFERASE ACTIVITY OF THE COMPLEX</scope>
    <scope>MUTAGENESIS OF 702-ASN-HIS-703</scope>
</reference>
<reference key="10">
    <citation type="journal article" date="2002" name="Cell">
        <title>Histone methyltransferase activity of a Drosophila Polycomb group repressor complex.</title>
        <authorList>
            <person name="Mueller J."/>
            <person name="Hart C.M."/>
            <person name="Francis N.J."/>
            <person name="Vargas M.L."/>
            <person name="Sengupta A."/>
            <person name="Wild B."/>
            <person name="Miller E.L."/>
            <person name="O'Connor M.B."/>
            <person name="Kingston R.E."/>
            <person name="Simon J.A."/>
        </authorList>
    </citation>
    <scope>IDENTIFICATION IN AN ESC/E(Z) COMPLEX WITH CAF1-55; ESC AND SU(Z)12</scope>
    <scope>METHYLTRANSFERASE ACTIVITY OF THE COMPLEX</scope>
    <scope>MUTAGENESIS OF ARG-699 AND HIS-703</scope>
</reference>
<reference key="11">
    <citation type="journal article" date="2003" name="Genesis">
        <title>Polycomb group proteins ESC and E(Z) are present in multiple distinct complexes that undergo dynamic changes during development.</title>
        <authorList>
            <person name="Furuyama T."/>
            <person name="Tie F."/>
            <person name="Harte P.J."/>
        </authorList>
    </citation>
    <scope>IDENTIFICATION IN AN ESC/E(Z) COMPLEX WITH CAF1-55; ESC AND HDAC1</scope>
</reference>
<reference key="12">
    <citation type="journal article" date="2003" name="Mol. Cell. Biol.">
        <title>A 1-megadalton ESC/E(Z) complex from Drosophila that contains polycomblike and RPD3.</title>
        <authorList>
            <person name="Tie F."/>
            <person name="Prasad-Sinha J."/>
            <person name="Birve A."/>
            <person name="Rasmuson-Lestander A."/>
            <person name="Harte P.J."/>
        </authorList>
    </citation>
    <scope>IDENTIFICATION IN AN ESC/E(Z) COMPLEX WITH CAF1-55; ESC; PCL; HDAC1 AND SU(Z)12</scope>
</reference>
<reference key="13">
    <citation type="journal article" date="2003" name="Nucleic Acids Res.">
        <title>The Drosophila Corto protein interacts with Polycomb-group proteins and the GAGA factor.</title>
        <authorList>
            <person name="Salvaing J."/>
            <person name="Lopez A."/>
            <person name="Boivin A."/>
            <person name="Deutsch J.S."/>
            <person name="Peronnet F."/>
        </authorList>
    </citation>
    <scope>INTERACTION WITH CORTO</scope>
</reference>
<reference key="14">
    <citation type="journal article" date="2008" name="J. Proteome Res.">
        <title>Phosphoproteome analysis of Drosophila melanogaster embryos.</title>
        <authorList>
            <person name="Zhai B."/>
            <person name="Villen J."/>
            <person name="Beausoleil S.A."/>
            <person name="Mintseris J."/>
            <person name="Gygi S.P."/>
        </authorList>
    </citation>
    <scope>PHOSPHORYLATION [LARGE SCALE ANALYSIS] AT SER-493 AND THR-502</scope>
    <scope>IDENTIFICATION BY MASS SPECTROMETRY</scope>
    <source>
        <tissue>Embryo</tissue>
    </source>
</reference>
<reference key="15">
    <citation type="journal article" date="2012" name="Mol. Cell. Biol.">
        <title>Polycomb repressive complex 2-dependent and -independent functions of Jarid2 in transcriptional regulation in Drosophila.</title>
        <authorList>
            <person name="Herz H.M."/>
            <person name="Mohan M."/>
            <person name="Garrett A.S."/>
            <person name="Miller C."/>
            <person name="Casto D."/>
            <person name="Zhang Y."/>
            <person name="Seidel C."/>
            <person name="Haug J.S."/>
            <person name="Florens L."/>
            <person name="Washburn M.P."/>
            <person name="Yamaguchi M."/>
            <person name="Shiekhattar R."/>
            <person name="Shilatifard A."/>
        </authorList>
    </citation>
    <scope>FUNCTION</scope>
    <scope>IDENTIFICATION IN THE PRC2.2 COMPLEX</scope>
    <scope>SUBCELLULAR LOCATION</scope>
    <scope>IDENTIFICATION BY MASS SPECTROMETRY</scope>
</reference>
<reference key="16">
    <citation type="journal article" date="2015" name="Mol. Cell">
        <title>Jarid2 Methylation via the PRC2 Complex Regulates H3K27me3 Deposition during Cell Differentiation.</title>
        <authorList>
            <person name="Sanulli S."/>
            <person name="Justin N."/>
            <person name="Teissandier A."/>
            <person name="Ancelin K."/>
            <person name="Portoso M."/>
            <person name="Caron M."/>
            <person name="Michaud A."/>
            <person name="Lombard B."/>
            <person name="da Rocha S.T."/>
            <person name="Offer J."/>
            <person name="Loew D."/>
            <person name="Servant N."/>
            <person name="Wassef M."/>
            <person name="Burlina F."/>
            <person name="Gamblin S.J."/>
            <person name="Heard E."/>
            <person name="Margueron R."/>
        </authorList>
    </citation>
    <scope>FUNCTION</scope>
    <scope>CATALYTIC ACTIVITY</scope>
</reference>
<reference key="17">
    <citation type="journal article" date="2019" name="Mol. Cell">
        <title>Core Components of the Nuclear Pore Bind Distinct States of Chromatin and Contribute to Polycomb Repression.</title>
        <authorList>
            <person name="Gozalo A."/>
            <person name="Duke A."/>
            <person name="Lan Y."/>
            <person name="Pascual-Garcia P."/>
            <person name="Talamas J.A."/>
            <person name="Nguyen S.C."/>
            <person name="Shah P.P."/>
            <person name="Jain R."/>
            <person name="Joyce E.F."/>
            <person name="Capelson M."/>
        </authorList>
    </citation>
    <scope>INTERACTION WITH NUP93-1</scope>
</reference>
<feature type="chain" id="PRO_0000213989" description="Histone-lysine N-methyltransferase E(z)">
    <location>
        <begin position="1"/>
        <end position="760"/>
    </location>
</feature>
<feature type="domain" description="SANT">
    <location>
        <begin position="443"/>
        <end position="491"/>
    </location>
</feature>
<feature type="domain" description="CXC" evidence="3">
    <location>
        <begin position="518"/>
        <end position="619"/>
    </location>
</feature>
<feature type="domain" description="SET" evidence="2">
    <location>
        <begin position="626"/>
        <end position="741"/>
    </location>
</feature>
<feature type="region of interest" description="Disordered" evidence="4">
    <location>
        <begin position="195"/>
        <end position="245"/>
    </location>
</feature>
<feature type="region of interest" description="Disordered" evidence="4">
    <location>
        <begin position="382"/>
        <end position="417"/>
    </location>
</feature>
<feature type="short sequence motif" description="Nuclear localization signal" evidence="1">
    <location>
        <begin position="505"/>
        <end position="510"/>
    </location>
</feature>
<feature type="compositionally biased region" description="Acidic residues" evidence="4">
    <location>
        <begin position="203"/>
        <end position="213"/>
    </location>
</feature>
<feature type="compositionally biased region" description="Basic and acidic residues" evidence="4">
    <location>
        <begin position="215"/>
        <end position="237"/>
    </location>
</feature>
<feature type="modified residue" description="Phosphoserine" evidence="12">
    <location>
        <position position="493"/>
    </location>
</feature>
<feature type="modified residue" description="Phosphothreonine" evidence="12">
    <location>
        <position position="502"/>
    </location>
</feature>
<feature type="mutagenesis site" description="Strongly reduces methyltransferase activity of the Esc/E(z) complex." evidence="8">
    <original>R</original>
    <variation>A</variation>
    <variation>H</variation>
    <location>
        <position position="699"/>
    </location>
</feature>
<feature type="mutagenesis site" description="Abolishes methyltransferase activity of the Esc/E(z) complex." evidence="7">
    <original>NH</original>
    <variation>AA</variation>
    <location>
        <begin position="702"/>
        <end position="703"/>
    </location>
</feature>
<feature type="mutagenesis site" description="Strongly reduces methyltransferase activity of the Esc/E(z) complex." evidence="8">
    <original>H</original>
    <variation>A</variation>
    <variation>K</variation>
    <location>
        <position position="703"/>
    </location>
</feature>
<feature type="sequence conflict" description="In Ref. 1; AAC46462." evidence="18" ref="1">
    <original>GTA</original>
    <variation>STS</variation>
    <location>
        <begin position="185"/>
        <end position="187"/>
    </location>
</feature>
<feature type="sequence conflict" description="In Ref. 1; AAC46462." evidence="18" ref="1">
    <original>T</original>
    <variation>P</variation>
    <location>
        <position position="194"/>
    </location>
</feature>
<feature type="sequence conflict" description="In Ref. 1; AAC46462." evidence="18" ref="1">
    <original>G</original>
    <variation>C</variation>
    <location>
        <position position="213"/>
    </location>
</feature>
<feature type="sequence conflict" description="In Ref. 1; AAC46462." evidence="18" ref="1">
    <original>D</original>
    <variation>E</variation>
    <location>
        <position position="223"/>
    </location>
</feature>
<feature type="sequence conflict" description="In Ref. 1; AAC46462." evidence="18" ref="1">
    <original>E</original>
    <variation>D</variation>
    <location>
        <position position="230"/>
    </location>
</feature>
<feature type="sequence conflict" description="In Ref. 1; AAC46462." evidence="18" ref="1">
    <original>L</original>
    <variation>V</variation>
    <location>
        <position position="240"/>
    </location>
</feature>
<feature type="sequence conflict" description="In Ref. 1; AAC46462." evidence="18" ref="1">
    <original>D</original>
    <variation>A</variation>
    <location>
        <position position="250"/>
    </location>
</feature>
<comment type="function">
    <text evidence="13 14">Polycomb group (PcG) protein. Catalytic subunit of the Esc/E(z) complex, which methylates 'Lys-9' and 'Lys-27' of histone H3, leading to transcriptional repression of the affected target gene (PubMed:22354997). As part of the PRC2 complex methylates the PRC2 accessory protein Jarid2 on 'Lys-46' (PubMed:25620564). While PcG proteins are generally required to maintain the transcriptionally repressive state of homeotic genes throughout development, this protein is specifically required during the first 6 hours of embryogenesis to establish the repressed state. The Esc/E(z) complex is necessary but not sufficient for the repression of homeotic target genes, suggesting that the recruitment of the distinct PRC1 complex is also required. Required for recruitment of the PRC2 complex to chromatin and H3K27me3 histone modification (PubMed:22354997).</text>
</comment>
<comment type="catalytic activity">
    <reaction>
        <text>L-lysyl(27)-[histone H3] + 3 S-adenosyl-L-methionine = N(6),N(6),N(6)-trimethyl-L-lysyl(27)-[histone H3] + 3 S-adenosyl-L-homocysteine + 3 H(+)</text>
        <dbReference type="Rhea" id="RHEA:60292"/>
        <dbReference type="Rhea" id="RHEA-COMP:15535"/>
        <dbReference type="Rhea" id="RHEA-COMP:15548"/>
        <dbReference type="ChEBI" id="CHEBI:15378"/>
        <dbReference type="ChEBI" id="CHEBI:29969"/>
        <dbReference type="ChEBI" id="CHEBI:57856"/>
        <dbReference type="ChEBI" id="CHEBI:59789"/>
        <dbReference type="ChEBI" id="CHEBI:61961"/>
        <dbReference type="EC" id="2.1.1.356"/>
    </reaction>
</comment>
<comment type="catalytic activity">
    <reaction evidence="14">
        <text>L-lysyl-[protein] + 3 S-adenosyl-L-methionine = N(6),N(6),N(6)-trimethyl-L-lysyl-[protein] + 3 S-adenosyl-L-homocysteine + 3 H(+)</text>
        <dbReference type="Rhea" id="RHEA:54192"/>
        <dbReference type="Rhea" id="RHEA-COMP:9752"/>
        <dbReference type="Rhea" id="RHEA-COMP:13826"/>
        <dbReference type="ChEBI" id="CHEBI:15378"/>
        <dbReference type="ChEBI" id="CHEBI:29969"/>
        <dbReference type="ChEBI" id="CHEBI:57856"/>
        <dbReference type="ChEBI" id="CHEBI:59789"/>
        <dbReference type="ChEBI" id="CHEBI:61961"/>
    </reaction>
</comment>
<comment type="subunit">
    <text evidence="5 6 7 8 9 10 11 13 15 17">Component of the polycomb repressive complex 2 (PRC2, also known as the Esc/E(Z) complex), composed of Caf1-55, esc, E(z), Su(z)12, and possibly pho (PubMed:11124122, PubMed:11581156, PubMed:12408863, PubMed:12408864, PubMed:9566901). PRC2 associates with the accessory components Jarid2 and jing to form the PRC2 Jarid2-jing variant (PRC2.2) (PubMed:22354997). PRC2 may also associate with Pcl and HDAC1/Rpd3 during early embryogenesis (PubMed:11124122, PubMed:11581156, PubMed:12408863, PubMed:12408864, PubMed:12533794, PubMed:12697833). This complex is distinct from the PRC1 complex, which contains many other PcG proteins like Pc, Ph, Psc, Su(z)2 (PubMed:12533794). The two complexes however cooperate and interact together during the first 3 hours of development to establish PcG silencing. Interacts with corto in vitro (PubMed:12771214).</text>
</comment>
<comment type="interaction">
    <interactant intactId="EBI-112315">
        <id>P42124</id>
    </interactant>
    <interactant intactId="EBI-129424">
        <id>Q9VEX9</id>
        <label>Bin1</label>
    </interactant>
    <organismsDiffer>false</organismsDiffer>
    <experiments>7</experiments>
</comment>
<comment type="interaction">
    <interactant intactId="EBI-112315">
        <id>P42124</id>
    </interactant>
    <interactant intactId="EBI-75924">
        <id>Q24572</id>
        <label>Caf1-55</label>
    </interactant>
    <organismsDiffer>false</organismsDiffer>
    <experiments>7</experiments>
</comment>
<comment type="interaction">
    <interactant intactId="EBI-112315">
        <id>P42124</id>
    </interactant>
    <interactant intactId="EBI-300379">
        <id>P41046</id>
        <label>corto</label>
    </interactant>
    <organismsDiffer>false</organismsDiffer>
    <experiments>2</experiments>
</comment>
<comment type="interaction">
    <interactant intactId="EBI-112315">
        <id>P42124</id>
    </interactant>
    <interactant intactId="EBI-88911">
        <id>Q24338</id>
        <label>esc</label>
    </interactant>
    <organismsDiffer>false</organismsDiffer>
    <experiments>21</experiments>
</comment>
<comment type="interaction">
    <interactant intactId="EBI-112315">
        <id>P42124</id>
    </interactant>
    <interactant intactId="EBI-1207935">
        <id>Q95SW6</id>
        <label>escl</label>
    </interactant>
    <organismsDiffer>false</organismsDiffer>
    <experiments>2</experiments>
</comment>
<comment type="interaction">
    <interactant intactId="EBI-112315">
        <id>P42124</id>
    </interactant>
    <interactant intactId="EBI-302197">
        <id>Q94517</id>
        <label>HDAC1</label>
    </interactant>
    <organismsDiffer>false</organismsDiffer>
    <experiments>9</experiments>
</comment>
<comment type="interaction">
    <interactant intactId="EBI-112315">
        <id>P42124</id>
    </interactant>
    <interactant intactId="EBI-430086">
        <id>Q24459</id>
        <label>Pcl</label>
    </interactant>
    <organismsDiffer>false</organismsDiffer>
    <experiments>15</experiments>
</comment>
<comment type="subcellular location">
    <subcellularLocation>
        <location evidence="16 19">Nucleus</location>
    </subcellularLocation>
    <subcellularLocation>
        <location evidence="13">Chromosome</location>
    </subcellularLocation>
</comment>
<comment type="similarity">
    <text evidence="2">Belongs to the class V-like SAM-binding methyltransferase superfamily. Histone-lysine methyltransferase family. EZ subfamily.</text>
</comment>
<sequence length="760" mass="86935">MNSTKVPPEWKRRVKSEYIKIRQQKRYKRADEIKEAWIRNWDEHNHNVQDLYCESKVWQAKPYDPPHVDCVKRAEVTSYNGIPSGPQKVPICVINAVTPIPTMYTWAPTQQNFMVEDETVLHNIPYMGDEVLDKDGKFIEELIKNYDGKVHGDKDPSFMDDAIFVELVHALMRSYSKELEEAAPGTATAIKTETLAKSKQGEDDGVVDVDADGESPMKLEKTDSKGDLTEVEKKETEEPLETEDADVKPDVEEVKDKLPFPAPIIFQAISANFPDKGTAQELKEKYIELTEHQDPERPQECTPNIDGIKAESVSRERTMHSFHTLFCRRCFKYDCFLHRLQGHAGPNLQKRRYPELKPFAEPCSNSCYMLIDGMKEKLAADSKTPPIDSCNEASSEDSNDSNSQFSNKDFNHENSKDNGLTVNSAAVAEINSIMAGMMNITSTQCVWTGADQALYRVLHKVYLKNYCAIAHNMLTKTCRQVYEFAQKEDAEFSFEDLRQDFTPPRKKKKKQRLWSLHCRKIQLKKDSSSNHVYNYTPCDHPGHPCDMNCSCIQTQNFCEKFCNCSSDCQNRFPGCRCKAQCNTKQCPCYLAVRECDPDLCQACGADQFKLTKITCKNVCVQRGLHKHLLMAPSDIAGWGIFLKEGAQKNEFISEYCGEIISQDEADRRGKVYDKYMCSFLFNLNNDFVVDATRKGNKIRFANHSINPNCYAKVMMVTGDHRIGIFAKRAIQPGEELFFDYRYGPTEQLKFVGIEREMEIV</sequence>
<evidence type="ECO:0000255" key="1"/>
<evidence type="ECO:0000255" key="2">
    <source>
        <dbReference type="PROSITE-ProRule" id="PRU00190"/>
    </source>
</evidence>
<evidence type="ECO:0000255" key="3">
    <source>
        <dbReference type="PROSITE-ProRule" id="PRU00970"/>
    </source>
</evidence>
<evidence type="ECO:0000256" key="4">
    <source>
        <dbReference type="SAM" id="MobiDB-lite"/>
    </source>
</evidence>
<evidence type="ECO:0000269" key="5">
    <source>
    </source>
</evidence>
<evidence type="ECO:0000269" key="6">
    <source>
    </source>
</evidence>
<evidence type="ECO:0000269" key="7">
    <source>
    </source>
</evidence>
<evidence type="ECO:0000269" key="8">
    <source>
    </source>
</evidence>
<evidence type="ECO:0000269" key="9">
    <source>
    </source>
</evidence>
<evidence type="ECO:0000269" key="10">
    <source>
    </source>
</evidence>
<evidence type="ECO:0000269" key="11">
    <source>
    </source>
</evidence>
<evidence type="ECO:0000269" key="12">
    <source>
    </source>
</evidence>
<evidence type="ECO:0000269" key="13">
    <source>
    </source>
</evidence>
<evidence type="ECO:0000269" key="14">
    <source>
    </source>
</evidence>
<evidence type="ECO:0000269" key="15">
    <source>
    </source>
</evidence>
<evidence type="ECO:0000269" key="16">
    <source>
    </source>
</evidence>
<evidence type="ECO:0000269" key="17">
    <source>
    </source>
</evidence>
<evidence type="ECO:0000305" key="18"/>
<evidence type="ECO:0000305" key="19">
    <source>
    </source>
</evidence>
<gene>
    <name type="primary">E(z)</name>
    <name type="synonym">KMT6</name>
    <name type="ORF">CG6502</name>
</gene>
<keyword id="KW-0156">Chromatin regulator</keyword>
<keyword id="KW-0158">Chromosome</keyword>
<keyword id="KW-0217">Developmental protein</keyword>
<keyword id="KW-0489">Methyltransferase</keyword>
<keyword id="KW-0539">Nucleus</keyword>
<keyword id="KW-0597">Phosphoprotein</keyword>
<keyword id="KW-1185">Reference proteome</keyword>
<keyword id="KW-0678">Repressor</keyword>
<keyword id="KW-0949">S-adenosyl-L-methionine</keyword>
<keyword id="KW-0804">Transcription</keyword>
<keyword id="KW-0805">Transcription regulation</keyword>
<keyword id="KW-0808">Transferase</keyword>
<proteinExistence type="evidence at protein level"/>
<accession>P42124</accession>
<accession>B7Z0G2</accession>
<accession>Q9VTA3</accession>
<dbReference type="EC" id="2.1.1.356"/>
<dbReference type="EMBL" id="U00180">
    <property type="protein sequence ID" value="AAC46462.1"/>
    <property type="molecule type" value="mRNA"/>
</dbReference>
<dbReference type="EMBL" id="AE014296">
    <property type="protein sequence ID" value="AAF50149.1"/>
    <property type="molecule type" value="Genomic_DNA"/>
</dbReference>
<dbReference type="EMBL" id="AE014296">
    <property type="protein sequence ID" value="ACL83287.1"/>
    <property type="molecule type" value="Genomic_DNA"/>
</dbReference>
<dbReference type="EMBL" id="AY051785">
    <property type="protein sequence ID" value="AAK93209.1"/>
    <property type="molecule type" value="mRNA"/>
</dbReference>
<dbReference type="RefSeq" id="NP_001137932.1">
    <property type="nucleotide sequence ID" value="NM_001144460.3"/>
</dbReference>
<dbReference type="RefSeq" id="NP_524021.2">
    <property type="nucleotide sequence ID" value="NM_079297.3"/>
</dbReference>
<dbReference type="SMR" id="P42124"/>
<dbReference type="BioGRID" id="64582">
    <property type="interactions" value="45"/>
</dbReference>
<dbReference type="ComplexPortal" id="CPX-2591">
    <property type="entry name" value="Polycomb repressive complex 2, Pcl variant"/>
</dbReference>
<dbReference type="ComplexPortal" id="CPX-2603">
    <property type="entry name" value="Polycomb repressive complex 2, Jarid2-jing variant"/>
</dbReference>
<dbReference type="DIP" id="DIP-20386N"/>
<dbReference type="FunCoup" id="P42124">
    <property type="interactions" value="1026"/>
</dbReference>
<dbReference type="IntAct" id="P42124">
    <property type="interactions" value="24"/>
</dbReference>
<dbReference type="MINT" id="P42124"/>
<dbReference type="STRING" id="7227.FBpp0306192"/>
<dbReference type="BindingDB" id="P42124"/>
<dbReference type="ChEMBL" id="CHEMBL2169719"/>
<dbReference type="iPTMnet" id="P42124"/>
<dbReference type="PaxDb" id="7227-FBpp0306192"/>
<dbReference type="DNASU" id="39203"/>
<dbReference type="EnsemblMetazoa" id="FBtr0076279">
    <property type="protein sequence ID" value="FBpp0076008"/>
    <property type="gene ID" value="FBgn0000629"/>
</dbReference>
<dbReference type="EnsemblMetazoa" id="FBtr0273338">
    <property type="protein sequence ID" value="FBpp0271846"/>
    <property type="gene ID" value="FBgn0000629"/>
</dbReference>
<dbReference type="GeneID" id="39203"/>
<dbReference type="KEGG" id="dme:Dmel_CG6502"/>
<dbReference type="AGR" id="FB:FBgn0000629"/>
<dbReference type="CTD" id="39203"/>
<dbReference type="FlyBase" id="FBgn0000629">
    <property type="gene designation" value="E(z)"/>
</dbReference>
<dbReference type="VEuPathDB" id="VectorBase:FBgn0000629"/>
<dbReference type="eggNOG" id="KOG1079">
    <property type="taxonomic scope" value="Eukaryota"/>
</dbReference>
<dbReference type="HOGENOM" id="CLU_011342_0_0_1"/>
<dbReference type="InParanoid" id="P42124"/>
<dbReference type="OrthoDB" id="6141102at2759"/>
<dbReference type="PhylomeDB" id="P42124"/>
<dbReference type="Reactome" id="R-DME-212300">
    <property type="pathway name" value="PRC2 methylates histones and DNA"/>
</dbReference>
<dbReference type="Reactome" id="R-DME-2559580">
    <property type="pathway name" value="Oxidative Stress Induced Senescence"/>
</dbReference>
<dbReference type="Reactome" id="R-DME-8943724">
    <property type="pathway name" value="Regulation of PTEN gene transcription"/>
</dbReference>
<dbReference type="Reactome" id="R-DME-8953750">
    <property type="pathway name" value="Transcriptional Regulation by E2F6"/>
</dbReference>
<dbReference type="SignaLink" id="P42124"/>
<dbReference type="BioGRID-ORCS" id="39203">
    <property type="hits" value="0 hits in 3 CRISPR screens"/>
</dbReference>
<dbReference type="CD-CODE" id="58FDC23F">
    <property type="entry name" value="PcG body"/>
</dbReference>
<dbReference type="GenomeRNAi" id="39203"/>
<dbReference type="PRO" id="PR:P42124"/>
<dbReference type="Proteomes" id="UP000000803">
    <property type="component" value="Chromosome 3L"/>
</dbReference>
<dbReference type="Bgee" id="FBgn0000629">
    <property type="expression patterns" value="Expressed in head cyst cell (Drosophila) in testis and 150 other cell types or tissues"/>
</dbReference>
<dbReference type="ExpressionAtlas" id="P42124">
    <property type="expression patterns" value="baseline and differential"/>
</dbReference>
<dbReference type="GO" id="GO:0000785">
    <property type="term" value="C:chromatin"/>
    <property type="evidence" value="ECO:0000303"/>
    <property type="project" value="UniProtKB"/>
</dbReference>
<dbReference type="GO" id="GO:0035098">
    <property type="term" value="C:ESC/E(Z) complex"/>
    <property type="evidence" value="ECO:0000314"/>
    <property type="project" value="FlyBase"/>
</dbReference>
<dbReference type="GO" id="GO:0035097">
    <property type="term" value="C:histone methyltransferase complex"/>
    <property type="evidence" value="ECO:0000314"/>
    <property type="project" value="FlyBase"/>
</dbReference>
<dbReference type="GO" id="GO:0005634">
    <property type="term" value="C:nucleus"/>
    <property type="evidence" value="ECO:0000314"/>
    <property type="project" value="FlyBase"/>
</dbReference>
<dbReference type="GO" id="GO:0003682">
    <property type="term" value="F:chromatin binding"/>
    <property type="evidence" value="ECO:0000318"/>
    <property type="project" value="GO_Central"/>
</dbReference>
<dbReference type="GO" id="GO:0003677">
    <property type="term" value="F:DNA binding"/>
    <property type="evidence" value="ECO:0000303"/>
    <property type="project" value="UniProtKB"/>
</dbReference>
<dbReference type="GO" id="GO:0046976">
    <property type="term" value="F:histone H3K27 methyltransferase activity"/>
    <property type="evidence" value="ECO:0000314"/>
    <property type="project" value="FlyBase"/>
</dbReference>
<dbReference type="GO" id="GO:0140951">
    <property type="term" value="F:histone H3K27 trimethyltransferase activity"/>
    <property type="evidence" value="ECO:0007669"/>
    <property type="project" value="UniProtKB-EC"/>
</dbReference>
<dbReference type="GO" id="GO:0046974">
    <property type="term" value="F:histone H3K9 methyltransferase activity"/>
    <property type="evidence" value="ECO:0000314"/>
    <property type="project" value="FlyBase"/>
</dbReference>
<dbReference type="GO" id="GO:0042054">
    <property type="term" value="F:histone methyltransferase activity"/>
    <property type="evidence" value="ECO:0000314"/>
    <property type="project" value="FlyBase"/>
</dbReference>
<dbReference type="GO" id="GO:0016279">
    <property type="term" value="F:protein-lysine N-methyltransferase activity"/>
    <property type="evidence" value="ECO:0000314"/>
    <property type="project" value="UniProtKB"/>
</dbReference>
<dbReference type="GO" id="GO:0043565">
    <property type="term" value="F:sequence-specific DNA binding"/>
    <property type="evidence" value="ECO:0000314"/>
    <property type="project" value="FlyBase"/>
</dbReference>
<dbReference type="GO" id="GO:0009948">
    <property type="term" value="P:anterior/posterior axis specification"/>
    <property type="evidence" value="ECO:0000315"/>
    <property type="project" value="UniProtKB"/>
</dbReference>
<dbReference type="GO" id="GO:0007411">
    <property type="term" value="P:axon guidance"/>
    <property type="evidence" value="ECO:0000315"/>
    <property type="project" value="FlyBase"/>
</dbReference>
<dbReference type="GO" id="GO:0140718">
    <property type="term" value="P:facultative heterochromatin formation"/>
    <property type="evidence" value="ECO:0000315"/>
    <property type="project" value="FlyBase"/>
</dbReference>
<dbReference type="GO" id="GO:0031507">
    <property type="term" value="P:heterochromatin formation"/>
    <property type="evidence" value="ECO:0000318"/>
    <property type="project" value="GO_Central"/>
</dbReference>
<dbReference type="GO" id="GO:0032259">
    <property type="term" value="P:methylation"/>
    <property type="evidence" value="ECO:0007669"/>
    <property type="project" value="UniProtKB-KW"/>
</dbReference>
<dbReference type="GO" id="GO:0045892">
    <property type="term" value="P:negative regulation of DNA-templated transcription"/>
    <property type="evidence" value="ECO:0000314"/>
    <property type="project" value="UniProtKB"/>
</dbReference>
<dbReference type="GO" id="GO:0022008">
    <property type="term" value="P:neurogenesis"/>
    <property type="evidence" value="ECO:0000315"/>
    <property type="project" value="FlyBase"/>
</dbReference>
<dbReference type="GO" id="GO:1902692">
    <property type="term" value="P:regulation of neuroblast proliferation"/>
    <property type="evidence" value="ECO:0000316"/>
    <property type="project" value="UniProtKB"/>
</dbReference>
<dbReference type="GO" id="GO:0006357">
    <property type="term" value="P:regulation of transcription by RNA polymerase II"/>
    <property type="evidence" value="ECO:0000315"/>
    <property type="project" value="UniProtKB"/>
</dbReference>
<dbReference type="GO" id="GO:0035186">
    <property type="term" value="P:syncytial blastoderm mitotic cell cycle"/>
    <property type="evidence" value="ECO:0000315"/>
    <property type="project" value="FlyBase"/>
</dbReference>
<dbReference type="CDD" id="cd00167">
    <property type="entry name" value="SANT"/>
    <property type="match status" value="1"/>
</dbReference>
<dbReference type="CDD" id="cd19218">
    <property type="entry name" value="SET_EZH2"/>
    <property type="match status" value="1"/>
</dbReference>
<dbReference type="FunFam" id="2.170.270.10:FF:000001">
    <property type="entry name" value="Putative histone-lysine N-methyltransferase EZH2"/>
    <property type="match status" value="1"/>
</dbReference>
<dbReference type="Gene3D" id="2.170.270.10">
    <property type="entry name" value="SET domain"/>
    <property type="match status" value="1"/>
</dbReference>
<dbReference type="InterPro" id="IPR026489">
    <property type="entry name" value="CXC_dom"/>
</dbReference>
<dbReference type="InterPro" id="IPR045318">
    <property type="entry name" value="EZH1/2-like"/>
</dbReference>
<dbReference type="InterPro" id="IPR048358">
    <property type="entry name" value="EZH1/2_MCSS"/>
</dbReference>
<dbReference type="InterPro" id="IPR044439">
    <property type="entry name" value="EZH2_SET"/>
</dbReference>
<dbReference type="InterPro" id="IPR041343">
    <property type="entry name" value="PRC2_HTH_1"/>
</dbReference>
<dbReference type="InterPro" id="IPR041355">
    <property type="entry name" value="Pre-SET_CXC"/>
</dbReference>
<dbReference type="InterPro" id="IPR001005">
    <property type="entry name" value="SANT/Myb"/>
</dbReference>
<dbReference type="InterPro" id="IPR001214">
    <property type="entry name" value="SET_dom"/>
</dbReference>
<dbReference type="InterPro" id="IPR046341">
    <property type="entry name" value="SET_dom_sf"/>
</dbReference>
<dbReference type="InterPro" id="IPR033467">
    <property type="entry name" value="Tesmin/TSO1-like_CXC"/>
</dbReference>
<dbReference type="PANTHER" id="PTHR45747">
    <property type="entry name" value="HISTONE-LYSINE N-METHYLTRANSFERASE E(Z)"/>
    <property type="match status" value="1"/>
</dbReference>
<dbReference type="PANTHER" id="PTHR45747:SF4">
    <property type="entry name" value="HISTONE-LYSINE N-METHYLTRANSFERASE E(Z)"/>
    <property type="match status" value="1"/>
</dbReference>
<dbReference type="Pfam" id="PF21358">
    <property type="entry name" value="Ezh2_MCSS"/>
    <property type="match status" value="1"/>
</dbReference>
<dbReference type="Pfam" id="PF18118">
    <property type="entry name" value="PRC2_HTH_1"/>
    <property type="match status" value="1"/>
</dbReference>
<dbReference type="Pfam" id="PF18264">
    <property type="entry name" value="preSET_CXC"/>
    <property type="match status" value="1"/>
</dbReference>
<dbReference type="Pfam" id="PF00856">
    <property type="entry name" value="SET"/>
    <property type="match status" value="1"/>
</dbReference>
<dbReference type="SMART" id="SM01114">
    <property type="entry name" value="CXC"/>
    <property type="match status" value="1"/>
</dbReference>
<dbReference type="SMART" id="SM00717">
    <property type="entry name" value="SANT"/>
    <property type="match status" value="2"/>
</dbReference>
<dbReference type="SMART" id="SM00317">
    <property type="entry name" value="SET"/>
    <property type="match status" value="1"/>
</dbReference>
<dbReference type="SUPFAM" id="SSF82199">
    <property type="entry name" value="SET domain"/>
    <property type="match status" value="1"/>
</dbReference>
<dbReference type="PROSITE" id="PS51633">
    <property type="entry name" value="CXC"/>
    <property type="match status" value="1"/>
</dbReference>
<dbReference type="PROSITE" id="PS50280">
    <property type="entry name" value="SET"/>
    <property type="match status" value="1"/>
</dbReference>
<name>EZ_DROME</name>